<gene>
    <name evidence="1" type="primary">pgi</name>
    <name type="ordered locus">Rcas_0710</name>
</gene>
<accession>A7NH85</accession>
<organism>
    <name type="scientific">Roseiflexus castenholzii (strain DSM 13941 / HLO8)</name>
    <dbReference type="NCBI Taxonomy" id="383372"/>
    <lineage>
        <taxon>Bacteria</taxon>
        <taxon>Bacillati</taxon>
        <taxon>Chloroflexota</taxon>
        <taxon>Chloroflexia</taxon>
        <taxon>Chloroflexales</taxon>
        <taxon>Roseiflexineae</taxon>
        <taxon>Roseiflexaceae</taxon>
        <taxon>Roseiflexus</taxon>
    </lineage>
</organism>
<feature type="chain" id="PRO_1000206371" description="Glucose-6-phosphate isomerase">
    <location>
        <begin position="1"/>
        <end position="543"/>
    </location>
</feature>
<feature type="active site" description="Proton donor" evidence="1">
    <location>
        <position position="353"/>
    </location>
</feature>
<feature type="active site" evidence="1">
    <location>
        <position position="384"/>
    </location>
</feature>
<feature type="active site" evidence="1">
    <location>
        <position position="504"/>
    </location>
</feature>
<sequence>MTLLTQIPEWRALETHYRAIRDVHLRRLFAEDPGRGERMTAEAAGLFFDYSKNRVTDETLRLLMALAEARGLRARIDAMFRGERINITENRAVLHVALRAPRGAVILVDGVNVVPDVHAVLDRMAAFAEQVRSGAWSGFTGKPIRNIVNIGIGGSDLGPVMAYEALRSYSRRNLTLRFVSNIDGNDFAEATRDLDPAETLFIVASKTFTTLETMTNARTARAWLLAALGDDAAVARHFVAVSTNAAEVAKFGIDTANMFGFWDWVGGRYSMTSAIGLSTMIALGPDHFRDMLAGFHAMDEHFRTAPFDRNLPVIHGLLTVWYANFFGVETVAILPYDNYLKRFPAYLQQLTMESNGKSVTLSGEPVTYQTGPIYWGEPGTNGQHSFYQLIHQGTRLVLCDFIGFAETLNPLGAHHDLLMANMFAQAEALAFGKTTEEALAEGTPAWLAPHRTFPGNRPSNTFLAERLTPAVLGALVALYEHSVFTQGAIWDINSFDQWGVELGKVLAGRIAPELMSEVAPSPAHDSSTNALIRRYRAWRGRAL</sequence>
<dbReference type="EC" id="5.3.1.9" evidence="1"/>
<dbReference type="EMBL" id="CP000804">
    <property type="protein sequence ID" value="ABU56832.1"/>
    <property type="molecule type" value="Genomic_DNA"/>
</dbReference>
<dbReference type="RefSeq" id="WP_012119262.1">
    <property type="nucleotide sequence ID" value="NC_009767.1"/>
</dbReference>
<dbReference type="SMR" id="A7NH85"/>
<dbReference type="STRING" id="383372.Rcas_0710"/>
<dbReference type="KEGG" id="rca:Rcas_0710"/>
<dbReference type="eggNOG" id="COG0166">
    <property type="taxonomic scope" value="Bacteria"/>
</dbReference>
<dbReference type="HOGENOM" id="CLU_017947_3_1_0"/>
<dbReference type="OrthoDB" id="140919at2"/>
<dbReference type="UniPathway" id="UPA00109">
    <property type="reaction ID" value="UER00181"/>
</dbReference>
<dbReference type="UniPathway" id="UPA00138"/>
<dbReference type="Proteomes" id="UP000000263">
    <property type="component" value="Chromosome"/>
</dbReference>
<dbReference type="GO" id="GO:0005829">
    <property type="term" value="C:cytosol"/>
    <property type="evidence" value="ECO:0007669"/>
    <property type="project" value="TreeGrafter"/>
</dbReference>
<dbReference type="GO" id="GO:0097367">
    <property type="term" value="F:carbohydrate derivative binding"/>
    <property type="evidence" value="ECO:0007669"/>
    <property type="project" value="InterPro"/>
</dbReference>
<dbReference type="GO" id="GO:0004347">
    <property type="term" value="F:glucose-6-phosphate isomerase activity"/>
    <property type="evidence" value="ECO:0007669"/>
    <property type="project" value="UniProtKB-UniRule"/>
</dbReference>
<dbReference type="GO" id="GO:0048029">
    <property type="term" value="F:monosaccharide binding"/>
    <property type="evidence" value="ECO:0007669"/>
    <property type="project" value="TreeGrafter"/>
</dbReference>
<dbReference type="GO" id="GO:0006094">
    <property type="term" value="P:gluconeogenesis"/>
    <property type="evidence" value="ECO:0007669"/>
    <property type="project" value="UniProtKB-UniRule"/>
</dbReference>
<dbReference type="GO" id="GO:0051156">
    <property type="term" value="P:glucose 6-phosphate metabolic process"/>
    <property type="evidence" value="ECO:0007669"/>
    <property type="project" value="TreeGrafter"/>
</dbReference>
<dbReference type="GO" id="GO:0006096">
    <property type="term" value="P:glycolytic process"/>
    <property type="evidence" value="ECO:0007669"/>
    <property type="project" value="UniProtKB-UniRule"/>
</dbReference>
<dbReference type="CDD" id="cd05015">
    <property type="entry name" value="SIS_PGI_1"/>
    <property type="match status" value="1"/>
</dbReference>
<dbReference type="CDD" id="cd05016">
    <property type="entry name" value="SIS_PGI_2"/>
    <property type="match status" value="1"/>
</dbReference>
<dbReference type="FunFam" id="1.10.1390.10:FF:000001">
    <property type="entry name" value="Glucose-6-phosphate isomerase"/>
    <property type="match status" value="1"/>
</dbReference>
<dbReference type="FunFam" id="3.40.50.10490:FF:000018">
    <property type="entry name" value="Glucose-6-phosphate isomerase"/>
    <property type="match status" value="1"/>
</dbReference>
<dbReference type="Gene3D" id="1.10.1390.10">
    <property type="match status" value="1"/>
</dbReference>
<dbReference type="Gene3D" id="3.40.50.10490">
    <property type="entry name" value="Glucose-6-phosphate isomerase like protein, domain 1"/>
    <property type="match status" value="2"/>
</dbReference>
<dbReference type="HAMAP" id="MF_00473">
    <property type="entry name" value="G6P_isomerase"/>
    <property type="match status" value="1"/>
</dbReference>
<dbReference type="InterPro" id="IPR001672">
    <property type="entry name" value="G6P_Isomerase"/>
</dbReference>
<dbReference type="InterPro" id="IPR023096">
    <property type="entry name" value="G6P_Isomerase_C"/>
</dbReference>
<dbReference type="InterPro" id="IPR018189">
    <property type="entry name" value="Phosphoglucose_isomerase_CS"/>
</dbReference>
<dbReference type="InterPro" id="IPR046348">
    <property type="entry name" value="SIS_dom_sf"/>
</dbReference>
<dbReference type="InterPro" id="IPR035476">
    <property type="entry name" value="SIS_PGI_1"/>
</dbReference>
<dbReference type="InterPro" id="IPR035482">
    <property type="entry name" value="SIS_PGI_2"/>
</dbReference>
<dbReference type="NCBIfam" id="NF001211">
    <property type="entry name" value="PRK00179.1"/>
    <property type="match status" value="1"/>
</dbReference>
<dbReference type="PANTHER" id="PTHR11469">
    <property type="entry name" value="GLUCOSE-6-PHOSPHATE ISOMERASE"/>
    <property type="match status" value="1"/>
</dbReference>
<dbReference type="PANTHER" id="PTHR11469:SF1">
    <property type="entry name" value="GLUCOSE-6-PHOSPHATE ISOMERASE"/>
    <property type="match status" value="1"/>
</dbReference>
<dbReference type="Pfam" id="PF00342">
    <property type="entry name" value="PGI"/>
    <property type="match status" value="1"/>
</dbReference>
<dbReference type="PRINTS" id="PR00662">
    <property type="entry name" value="G6PISOMERASE"/>
</dbReference>
<dbReference type="SUPFAM" id="SSF53697">
    <property type="entry name" value="SIS domain"/>
    <property type="match status" value="1"/>
</dbReference>
<dbReference type="PROSITE" id="PS00765">
    <property type="entry name" value="P_GLUCOSE_ISOMERASE_1"/>
    <property type="match status" value="1"/>
</dbReference>
<dbReference type="PROSITE" id="PS00174">
    <property type="entry name" value="P_GLUCOSE_ISOMERASE_2"/>
    <property type="match status" value="1"/>
</dbReference>
<dbReference type="PROSITE" id="PS51463">
    <property type="entry name" value="P_GLUCOSE_ISOMERASE_3"/>
    <property type="match status" value="1"/>
</dbReference>
<protein>
    <recommendedName>
        <fullName evidence="1">Glucose-6-phosphate isomerase</fullName>
        <shortName evidence="1">GPI</shortName>
        <ecNumber evidence="1">5.3.1.9</ecNumber>
    </recommendedName>
    <alternativeName>
        <fullName evidence="1">Phosphoglucose isomerase</fullName>
        <shortName evidence="1">PGI</shortName>
    </alternativeName>
    <alternativeName>
        <fullName evidence="1">Phosphohexose isomerase</fullName>
        <shortName evidence="1">PHI</shortName>
    </alternativeName>
</protein>
<evidence type="ECO:0000255" key="1">
    <source>
        <dbReference type="HAMAP-Rule" id="MF_00473"/>
    </source>
</evidence>
<keyword id="KW-0963">Cytoplasm</keyword>
<keyword id="KW-0312">Gluconeogenesis</keyword>
<keyword id="KW-0324">Glycolysis</keyword>
<keyword id="KW-0413">Isomerase</keyword>
<keyword id="KW-1185">Reference proteome</keyword>
<name>G6PI_ROSCS</name>
<reference key="1">
    <citation type="submission" date="2007-08" db="EMBL/GenBank/DDBJ databases">
        <title>Complete sequence of Roseiflexus castenholzii DSM 13941.</title>
        <authorList>
            <consortium name="US DOE Joint Genome Institute"/>
            <person name="Copeland A."/>
            <person name="Lucas S."/>
            <person name="Lapidus A."/>
            <person name="Barry K."/>
            <person name="Glavina del Rio T."/>
            <person name="Dalin E."/>
            <person name="Tice H."/>
            <person name="Pitluck S."/>
            <person name="Thompson L.S."/>
            <person name="Brettin T."/>
            <person name="Bruce D."/>
            <person name="Detter J.C."/>
            <person name="Han C."/>
            <person name="Tapia R."/>
            <person name="Schmutz J."/>
            <person name="Larimer F."/>
            <person name="Land M."/>
            <person name="Hauser L."/>
            <person name="Kyrpides N."/>
            <person name="Mikhailova N."/>
            <person name="Bryant D.A."/>
            <person name="Hanada S."/>
            <person name="Tsukatani Y."/>
            <person name="Richardson P."/>
        </authorList>
    </citation>
    <scope>NUCLEOTIDE SEQUENCE [LARGE SCALE GENOMIC DNA]</scope>
    <source>
        <strain>DSM 13941 / HLO8</strain>
    </source>
</reference>
<comment type="function">
    <text evidence="1">Catalyzes the reversible isomerization of glucose-6-phosphate to fructose-6-phosphate.</text>
</comment>
<comment type="catalytic activity">
    <reaction evidence="1">
        <text>alpha-D-glucose 6-phosphate = beta-D-fructose 6-phosphate</text>
        <dbReference type="Rhea" id="RHEA:11816"/>
        <dbReference type="ChEBI" id="CHEBI:57634"/>
        <dbReference type="ChEBI" id="CHEBI:58225"/>
        <dbReference type="EC" id="5.3.1.9"/>
    </reaction>
</comment>
<comment type="pathway">
    <text evidence="1">Carbohydrate biosynthesis; gluconeogenesis.</text>
</comment>
<comment type="pathway">
    <text evidence="1">Carbohydrate degradation; glycolysis; D-glyceraldehyde 3-phosphate and glycerone phosphate from D-glucose: step 2/4.</text>
</comment>
<comment type="subcellular location">
    <subcellularLocation>
        <location evidence="1">Cytoplasm</location>
    </subcellularLocation>
</comment>
<comment type="similarity">
    <text evidence="1">Belongs to the GPI family.</text>
</comment>
<proteinExistence type="inferred from homology"/>